<proteinExistence type="inferred from homology"/>
<sequence length="740" mass="81783">MFNEILKKVDWHGNVLSLSTGKIARNADGAVLASMGNTSVLCTVVFDKNTKKDMDFFPLGVYYREMAYAAGKIPGGFIKKEGKFSEYEVLVSRLIDRSIRPLFDSNFRNDTQIICTVMSYDPRYSPDILAIIGSSAALAISGIPIVKPIGAARVGIVNDEFILNPVIHDNTGVNELDLVVAATFDSVTMIEAQACEIDEEKMLAAIEFGYKSLKPVINAIEEIKSSIRKDIFEVTARPHLRYNDEILKHFSSDIKSALLLQTKNERNQQLQLIQQKVIDYFSSKANSEANDGDDILNIEKALDDAKSKIFRDLVLQNKTRIGNRAVDEIRPIICEAGLFNTVHGSALFTRGDTQSLATITLGSSTDEQIVEQLNKCERQNFLLDYIFLPYSVGEISPLRAASRREIGHGWLAKKAIQLVIPSKDVFPYTIRIVSEITQSDGSSSMATVCSASLSLMEAGVPIKTHVAGIAMGLVLGEGNKFEILSDISGCEDHLGDMDFKVASTKNGITALQLDIKVQGINLSMIESTFRQAKIGINHILNVMNNTISCPKSELSTYAPMVQTLEIQKEKIRDVIGLGGKVIKELCKTFDVEIDISENGEVKVWGNVGENVKKAVQSIENIVFVPQIGDIFDGEVVKVIESGAFIKYVTGRDGFVHISEINDTHIKDINAHVKLGDKVKVKIIGIDHKNRVKLTLRTDKEHCKNKNEQYNDITTTTGGVKKKIKIAPKEAAVISNRKYFD</sequence>
<comment type="function">
    <text evidence="1">Involved in mRNA degradation. Catalyzes the phosphorolysis of single-stranded polyribonucleotides processively in the 3'- to 5'-direction.</text>
</comment>
<comment type="catalytic activity">
    <reaction evidence="1">
        <text>RNA(n+1) + phosphate = RNA(n) + a ribonucleoside 5'-diphosphate</text>
        <dbReference type="Rhea" id="RHEA:22096"/>
        <dbReference type="Rhea" id="RHEA-COMP:14527"/>
        <dbReference type="Rhea" id="RHEA-COMP:17342"/>
        <dbReference type="ChEBI" id="CHEBI:43474"/>
        <dbReference type="ChEBI" id="CHEBI:57930"/>
        <dbReference type="ChEBI" id="CHEBI:140395"/>
        <dbReference type="EC" id="2.7.7.8"/>
    </reaction>
</comment>
<comment type="cofactor">
    <cofactor evidence="1">
        <name>Mg(2+)</name>
        <dbReference type="ChEBI" id="CHEBI:18420"/>
    </cofactor>
</comment>
<comment type="subcellular location">
    <subcellularLocation>
        <location evidence="1">Cytoplasm</location>
    </subcellularLocation>
</comment>
<comment type="similarity">
    <text evidence="1">Belongs to the polyribonucleotide nucleotidyltransferase family.</text>
</comment>
<reference key="1">
    <citation type="journal article" date="2007" name="Proc. Natl. Acad. Sci. U.S.A.">
        <title>The Orientia tsutsugamushi genome reveals massive proliferation of conjugative type IV secretion system and host-cell interaction genes.</title>
        <authorList>
            <person name="Cho N.-H."/>
            <person name="Kim H.-R."/>
            <person name="Lee J.-H."/>
            <person name="Kim S.-Y."/>
            <person name="Kim J."/>
            <person name="Cha S."/>
            <person name="Kim S.-Y."/>
            <person name="Darby A.C."/>
            <person name="Fuxelius H.-H."/>
            <person name="Yin J."/>
            <person name="Kim J.H."/>
            <person name="Kim J."/>
            <person name="Lee S.J."/>
            <person name="Koh Y.-S."/>
            <person name="Jang W.-J."/>
            <person name="Park K.-H."/>
            <person name="Andersson S.G.E."/>
            <person name="Choi M.-S."/>
            <person name="Kim I.-S."/>
        </authorList>
    </citation>
    <scope>NUCLEOTIDE SEQUENCE [LARGE SCALE GENOMIC DNA]</scope>
    <source>
        <strain>Boryong</strain>
    </source>
</reference>
<feature type="chain" id="PRO_0000329746" description="Polyribonucleotide nucleotidyltransferase">
    <location>
        <begin position="1"/>
        <end position="740"/>
    </location>
</feature>
<feature type="domain" description="KH" evidence="1">
    <location>
        <begin position="559"/>
        <end position="618"/>
    </location>
</feature>
<feature type="domain" description="S1 motif" evidence="1">
    <location>
        <begin position="628"/>
        <end position="696"/>
    </location>
</feature>
<feature type="binding site" evidence="1">
    <location>
        <position position="492"/>
    </location>
    <ligand>
        <name>Mg(2+)</name>
        <dbReference type="ChEBI" id="CHEBI:18420"/>
    </ligand>
</feature>
<feature type="binding site" evidence="1">
    <location>
        <position position="498"/>
    </location>
    <ligand>
        <name>Mg(2+)</name>
        <dbReference type="ChEBI" id="CHEBI:18420"/>
    </ligand>
</feature>
<gene>
    <name evidence="1" type="primary">pnp</name>
    <name type="ordered locus">OTBS_0162</name>
</gene>
<organism>
    <name type="scientific">Orientia tsutsugamushi (strain Boryong)</name>
    <name type="common">Rickettsia tsutsugamushi</name>
    <dbReference type="NCBI Taxonomy" id="357244"/>
    <lineage>
        <taxon>Bacteria</taxon>
        <taxon>Pseudomonadati</taxon>
        <taxon>Pseudomonadota</taxon>
        <taxon>Alphaproteobacteria</taxon>
        <taxon>Rickettsiales</taxon>
        <taxon>Rickettsiaceae</taxon>
        <taxon>Rickettsieae</taxon>
        <taxon>Orientia</taxon>
    </lineage>
</organism>
<protein>
    <recommendedName>
        <fullName evidence="1">Polyribonucleotide nucleotidyltransferase</fullName>
        <ecNumber evidence="1">2.7.7.8</ecNumber>
    </recommendedName>
    <alternativeName>
        <fullName evidence="1">Polynucleotide phosphorylase</fullName>
        <shortName evidence="1">PNPase</shortName>
    </alternativeName>
</protein>
<name>PNP_ORITB</name>
<dbReference type="EC" id="2.7.7.8" evidence="1"/>
<dbReference type="EMBL" id="AM494475">
    <property type="protein sequence ID" value="CAM79228.1"/>
    <property type="molecule type" value="Genomic_DNA"/>
</dbReference>
<dbReference type="RefSeq" id="WP_011944308.1">
    <property type="nucleotide sequence ID" value="NC_009488.1"/>
</dbReference>
<dbReference type="SMR" id="A5CC62"/>
<dbReference type="KEGG" id="ots:OTBS_0162"/>
<dbReference type="eggNOG" id="COG1185">
    <property type="taxonomic scope" value="Bacteria"/>
</dbReference>
<dbReference type="HOGENOM" id="CLU_004217_2_2_5"/>
<dbReference type="Proteomes" id="UP000001565">
    <property type="component" value="Chromosome"/>
</dbReference>
<dbReference type="GO" id="GO:0005829">
    <property type="term" value="C:cytosol"/>
    <property type="evidence" value="ECO:0007669"/>
    <property type="project" value="TreeGrafter"/>
</dbReference>
<dbReference type="GO" id="GO:0000175">
    <property type="term" value="F:3'-5'-RNA exonuclease activity"/>
    <property type="evidence" value="ECO:0007669"/>
    <property type="project" value="TreeGrafter"/>
</dbReference>
<dbReference type="GO" id="GO:0000287">
    <property type="term" value="F:magnesium ion binding"/>
    <property type="evidence" value="ECO:0007669"/>
    <property type="project" value="UniProtKB-UniRule"/>
</dbReference>
<dbReference type="GO" id="GO:0004654">
    <property type="term" value="F:polyribonucleotide nucleotidyltransferase activity"/>
    <property type="evidence" value="ECO:0007669"/>
    <property type="project" value="UniProtKB-UniRule"/>
</dbReference>
<dbReference type="GO" id="GO:0003723">
    <property type="term" value="F:RNA binding"/>
    <property type="evidence" value="ECO:0007669"/>
    <property type="project" value="UniProtKB-UniRule"/>
</dbReference>
<dbReference type="GO" id="GO:0006402">
    <property type="term" value="P:mRNA catabolic process"/>
    <property type="evidence" value="ECO:0007669"/>
    <property type="project" value="UniProtKB-UniRule"/>
</dbReference>
<dbReference type="GO" id="GO:0006396">
    <property type="term" value="P:RNA processing"/>
    <property type="evidence" value="ECO:0007669"/>
    <property type="project" value="InterPro"/>
</dbReference>
<dbReference type="CDD" id="cd02393">
    <property type="entry name" value="KH-I_PNPase"/>
    <property type="match status" value="1"/>
</dbReference>
<dbReference type="CDD" id="cd11363">
    <property type="entry name" value="RNase_PH_PNPase_1"/>
    <property type="match status" value="1"/>
</dbReference>
<dbReference type="CDD" id="cd11364">
    <property type="entry name" value="RNase_PH_PNPase_2"/>
    <property type="match status" value="1"/>
</dbReference>
<dbReference type="FunFam" id="3.30.1370.10:FF:000001">
    <property type="entry name" value="Polyribonucleotide nucleotidyltransferase"/>
    <property type="match status" value="1"/>
</dbReference>
<dbReference type="FunFam" id="3.30.230.70:FF:000001">
    <property type="entry name" value="Polyribonucleotide nucleotidyltransferase"/>
    <property type="match status" value="1"/>
</dbReference>
<dbReference type="Gene3D" id="3.30.230.70">
    <property type="entry name" value="GHMP Kinase, N-terminal domain"/>
    <property type="match status" value="2"/>
</dbReference>
<dbReference type="Gene3D" id="3.30.1370.10">
    <property type="entry name" value="K Homology domain, type 1"/>
    <property type="match status" value="1"/>
</dbReference>
<dbReference type="Gene3D" id="2.40.50.140">
    <property type="entry name" value="Nucleic acid-binding proteins"/>
    <property type="match status" value="1"/>
</dbReference>
<dbReference type="HAMAP" id="MF_01595">
    <property type="entry name" value="PNPase"/>
    <property type="match status" value="1"/>
</dbReference>
<dbReference type="InterPro" id="IPR001247">
    <property type="entry name" value="ExoRNase_PH_dom1"/>
</dbReference>
<dbReference type="InterPro" id="IPR015847">
    <property type="entry name" value="ExoRNase_PH_dom2"/>
</dbReference>
<dbReference type="InterPro" id="IPR036345">
    <property type="entry name" value="ExoRNase_PH_dom2_sf"/>
</dbReference>
<dbReference type="InterPro" id="IPR004087">
    <property type="entry name" value="KH_dom"/>
</dbReference>
<dbReference type="InterPro" id="IPR004088">
    <property type="entry name" value="KH_dom_type_1"/>
</dbReference>
<dbReference type="InterPro" id="IPR036612">
    <property type="entry name" value="KH_dom_type_1_sf"/>
</dbReference>
<dbReference type="InterPro" id="IPR012340">
    <property type="entry name" value="NA-bd_OB-fold"/>
</dbReference>
<dbReference type="InterPro" id="IPR012162">
    <property type="entry name" value="PNPase"/>
</dbReference>
<dbReference type="InterPro" id="IPR027408">
    <property type="entry name" value="PNPase/RNase_PH_dom_sf"/>
</dbReference>
<dbReference type="InterPro" id="IPR015848">
    <property type="entry name" value="PNPase_PH_RNA-bd_bac/org-type"/>
</dbReference>
<dbReference type="InterPro" id="IPR036456">
    <property type="entry name" value="PNPase_PH_RNA-bd_sf"/>
</dbReference>
<dbReference type="InterPro" id="IPR020568">
    <property type="entry name" value="Ribosomal_Su5_D2-typ_SF"/>
</dbReference>
<dbReference type="InterPro" id="IPR003029">
    <property type="entry name" value="S1_domain"/>
</dbReference>
<dbReference type="NCBIfam" id="TIGR03591">
    <property type="entry name" value="polynuc_phos"/>
    <property type="match status" value="1"/>
</dbReference>
<dbReference type="NCBIfam" id="NF008805">
    <property type="entry name" value="PRK11824.1"/>
    <property type="match status" value="1"/>
</dbReference>
<dbReference type="PANTHER" id="PTHR11252">
    <property type="entry name" value="POLYRIBONUCLEOTIDE NUCLEOTIDYLTRANSFERASE"/>
    <property type="match status" value="1"/>
</dbReference>
<dbReference type="PANTHER" id="PTHR11252:SF0">
    <property type="entry name" value="POLYRIBONUCLEOTIDE NUCLEOTIDYLTRANSFERASE 1, MITOCHONDRIAL"/>
    <property type="match status" value="1"/>
</dbReference>
<dbReference type="Pfam" id="PF00013">
    <property type="entry name" value="KH_1"/>
    <property type="match status" value="1"/>
</dbReference>
<dbReference type="Pfam" id="PF03726">
    <property type="entry name" value="PNPase"/>
    <property type="match status" value="1"/>
</dbReference>
<dbReference type="Pfam" id="PF01138">
    <property type="entry name" value="RNase_PH"/>
    <property type="match status" value="2"/>
</dbReference>
<dbReference type="Pfam" id="PF03725">
    <property type="entry name" value="RNase_PH_C"/>
    <property type="match status" value="1"/>
</dbReference>
<dbReference type="Pfam" id="PF00575">
    <property type="entry name" value="S1"/>
    <property type="match status" value="1"/>
</dbReference>
<dbReference type="PIRSF" id="PIRSF005499">
    <property type="entry name" value="PNPase"/>
    <property type="match status" value="1"/>
</dbReference>
<dbReference type="SMART" id="SM00322">
    <property type="entry name" value="KH"/>
    <property type="match status" value="1"/>
</dbReference>
<dbReference type="SMART" id="SM00316">
    <property type="entry name" value="S1"/>
    <property type="match status" value="1"/>
</dbReference>
<dbReference type="SUPFAM" id="SSF54791">
    <property type="entry name" value="Eukaryotic type KH-domain (KH-domain type I)"/>
    <property type="match status" value="1"/>
</dbReference>
<dbReference type="SUPFAM" id="SSF50249">
    <property type="entry name" value="Nucleic acid-binding proteins"/>
    <property type="match status" value="1"/>
</dbReference>
<dbReference type="SUPFAM" id="SSF46915">
    <property type="entry name" value="Polynucleotide phosphorylase/guanosine pentaphosphate synthase (PNPase/GPSI), domain 3"/>
    <property type="match status" value="1"/>
</dbReference>
<dbReference type="SUPFAM" id="SSF55666">
    <property type="entry name" value="Ribonuclease PH domain 2-like"/>
    <property type="match status" value="2"/>
</dbReference>
<dbReference type="SUPFAM" id="SSF54211">
    <property type="entry name" value="Ribosomal protein S5 domain 2-like"/>
    <property type="match status" value="2"/>
</dbReference>
<dbReference type="PROSITE" id="PS50084">
    <property type="entry name" value="KH_TYPE_1"/>
    <property type="match status" value="1"/>
</dbReference>
<dbReference type="PROSITE" id="PS50126">
    <property type="entry name" value="S1"/>
    <property type="match status" value="1"/>
</dbReference>
<accession>A5CC62</accession>
<keyword id="KW-0963">Cytoplasm</keyword>
<keyword id="KW-0460">Magnesium</keyword>
<keyword id="KW-0479">Metal-binding</keyword>
<keyword id="KW-0548">Nucleotidyltransferase</keyword>
<keyword id="KW-1185">Reference proteome</keyword>
<keyword id="KW-0694">RNA-binding</keyword>
<keyword id="KW-0808">Transferase</keyword>
<evidence type="ECO:0000255" key="1">
    <source>
        <dbReference type="HAMAP-Rule" id="MF_01595"/>
    </source>
</evidence>